<proteinExistence type="evidence at protein level"/>
<keyword id="KW-0007">Acetylation</keyword>
<keyword id="KW-0010">Activator</keyword>
<keyword id="KW-0175">Coiled coil</keyword>
<keyword id="KW-0963">Cytoplasm</keyword>
<keyword id="KW-0597">Phosphoprotein</keyword>
<keyword id="KW-1185">Reference proteome</keyword>
<keyword id="KW-0677">Repeat</keyword>
<keyword id="KW-0346">Stress response</keyword>
<keyword id="KW-0810">Translation regulation</keyword>
<evidence type="ECO:0000250" key="1">
    <source>
        <dbReference type="UniProtKB" id="P33892"/>
    </source>
</evidence>
<evidence type="ECO:0000250" key="2">
    <source>
        <dbReference type="UniProtKB" id="Q92616"/>
    </source>
</evidence>
<evidence type="ECO:0000255" key="3"/>
<evidence type="ECO:0000269" key="4">
    <source>
    </source>
</evidence>
<evidence type="ECO:0000269" key="5">
    <source>
    </source>
</evidence>
<evidence type="ECO:0000269" key="6">
    <source>
    </source>
</evidence>
<evidence type="ECO:0000269" key="7">
    <source>
    </source>
</evidence>
<evidence type="ECO:0000269" key="8">
    <source>
    </source>
</evidence>
<evidence type="ECO:0000269" key="9">
    <source>
    </source>
</evidence>
<evidence type="ECO:0000303" key="10">
    <source>
    </source>
</evidence>
<evidence type="ECO:0000305" key="11"/>
<evidence type="ECO:0000305" key="12">
    <source>
    </source>
</evidence>
<evidence type="ECO:0000312" key="13">
    <source>
        <dbReference type="MGI" id="MGI:2444248"/>
    </source>
</evidence>
<gene>
    <name evidence="10 13" type="primary">Gcn1</name>
    <name evidence="13" type="synonym">Gcn1l1</name>
</gene>
<reference key="1">
    <citation type="journal article" date="2009" name="PLoS Biol.">
        <title>Lineage-specific biology revealed by a finished genome assembly of the mouse.</title>
        <authorList>
            <person name="Church D.M."/>
            <person name="Goodstadt L."/>
            <person name="Hillier L.W."/>
            <person name="Zody M.C."/>
            <person name="Goldstein S."/>
            <person name="She X."/>
            <person name="Bult C.J."/>
            <person name="Agarwala R."/>
            <person name="Cherry J.L."/>
            <person name="DiCuccio M."/>
            <person name="Hlavina W."/>
            <person name="Kapustin Y."/>
            <person name="Meric P."/>
            <person name="Maglott D."/>
            <person name="Birtle Z."/>
            <person name="Marques A.C."/>
            <person name="Graves T."/>
            <person name="Zhou S."/>
            <person name="Teague B."/>
            <person name="Potamousis K."/>
            <person name="Churas C."/>
            <person name="Place M."/>
            <person name="Herschleb J."/>
            <person name="Runnheim R."/>
            <person name="Forrest D."/>
            <person name="Amos-Landgraf J."/>
            <person name="Schwartz D.C."/>
            <person name="Cheng Z."/>
            <person name="Lindblad-Toh K."/>
            <person name="Eichler E.E."/>
            <person name="Ponting C.P."/>
        </authorList>
    </citation>
    <scope>NUCLEOTIDE SEQUENCE [LARGE SCALE GENOMIC DNA]</scope>
    <source>
        <strain>C57BL/6J</strain>
    </source>
</reference>
<reference key="2">
    <citation type="journal article" date="2004" name="Genome Res.">
        <title>The status, quality, and expansion of the NIH full-length cDNA project: the Mammalian Gene Collection (MGC).</title>
        <authorList>
            <consortium name="The MGC Project Team"/>
        </authorList>
    </citation>
    <scope>NUCLEOTIDE SEQUENCE [LARGE SCALE MRNA]</scope>
    <source>
        <tissue>Brain</tissue>
    </source>
</reference>
<reference key="3">
    <citation type="journal article" date="2005" name="J. Biol. Chem.">
        <title>IMPACT, a protein preferentially expressed in the mouse brain, binds GCN1 and inhibits GCN2 activation.</title>
        <authorList>
            <person name="Pereira C.M."/>
            <person name="Sattlegger E."/>
            <person name="Jiang H.-Y."/>
            <person name="Longo B.M."/>
            <person name="Jaqueta C.B."/>
            <person name="Hinnebusch A.G."/>
            <person name="Wek R.C."/>
            <person name="Mello L.E.A.M."/>
            <person name="Castilho B.A."/>
        </authorList>
    </citation>
    <scope>FUNCTION</scope>
    <scope>INTERACTION WITH IMPACT</scope>
    <scope>TISSUE SPECIFICITY</scope>
</reference>
<reference key="4">
    <citation type="journal article" date="2010" name="Cell">
        <title>A tissue-specific atlas of mouse protein phosphorylation and expression.</title>
        <authorList>
            <person name="Huttlin E.L."/>
            <person name="Jedrychowski M.P."/>
            <person name="Elias J.E."/>
            <person name="Goswami T."/>
            <person name="Rad R."/>
            <person name="Beausoleil S.A."/>
            <person name="Villen J."/>
            <person name="Haas W."/>
            <person name="Sowa M.E."/>
            <person name="Gygi S.P."/>
        </authorList>
    </citation>
    <scope>IDENTIFICATION BY MASS SPECTROMETRY [LARGE SCALE ANALYSIS]</scope>
    <source>
        <tissue>Brain</tissue>
        <tissue>Brown adipose tissue</tissue>
        <tissue>Heart</tissue>
        <tissue>Kidney</tissue>
        <tissue>Liver</tissue>
        <tissue>Lung</tissue>
        <tissue>Pancreas</tissue>
        <tissue>Spleen</tissue>
        <tissue>Testis</tissue>
    </source>
</reference>
<reference key="5">
    <citation type="journal article" date="2012" name="FEBS J.">
        <title>Evidence that Yih1 resides in a complex with ribosomes.</title>
        <authorList>
            <person name="Waller T."/>
            <person name="Lee S.J."/>
            <person name="Sattlegger E."/>
        </authorList>
    </citation>
    <scope>INTERACTION WITH IMPACT</scope>
</reference>
<reference key="6">
    <citation type="journal article" date="2013" name="J. Biol. Chem.">
        <title>IMPACT is a developmentally regulated protein in neurons that opposes the eukaryotic initiation factor 2alpha kinase GCN2 in the modulation of neurite outgrowth.</title>
        <authorList>
            <person name="Roffe M."/>
            <person name="Hajj G.N."/>
            <person name="Azevedo H.F."/>
            <person name="Alves V.S."/>
            <person name="Castilho B.A."/>
        </authorList>
    </citation>
    <scope>SUBCELLULAR LOCATION</scope>
</reference>
<reference key="7">
    <citation type="journal article" date="2014" name="Biochem. Biophys. Res. Commun.">
        <title>Evolutionarily conserved IMPACT impairs various stress responses that require GCN1 for activating the eIF2 kinase GCN2.</title>
        <authorList>
            <person name="Cambiaghi T.D."/>
            <person name="Pereira C.M."/>
            <person name="Shanmugam R."/>
            <person name="Bolech M."/>
            <person name="Wek R.C."/>
            <person name="Sattlegger E."/>
            <person name="Castilho B.A."/>
        </authorList>
    </citation>
    <scope>FUNCTION</scope>
    <scope>DOMAIN</scope>
    <scope>INTERACTION WITH EIF2AK4</scope>
</reference>
<reference key="8">
    <citation type="journal article" date="2020" name="PLoS Genet.">
        <title>Ribosome binding protein GCN1 regulates the cell cycle and cell proliferation and is essential for the embryonic development of mice.</title>
        <authorList>
            <person name="Yamazaki H."/>
            <person name="Kasai S."/>
            <person name="Mimura J."/>
            <person name="Ye P."/>
            <person name="Inose-Maruyama A."/>
            <person name="Tanji K."/>
            <person name="Wakabayashi K."/>
            <person name="Mizuno S."/>
            <person name="Sugiyama F."/>
            <person name="Takahashi S."/>
            <person name="Sato T."/>
            <person name="Ozaki T."/>
            <person name="Cavener D.R."/>
            <person name="Yamamoto M."/>
            <person name="Itoh K."/>
        </authorList>
    </citation>
    <scope>FUNCTION</scope>
    <scope>SUBCELLULAR LOCATION</scope>
    <scope>DOMAIN</scope>
    <scope>DISRUPTION PHENOTYPE</scope>
    <scope>MUTAGENESIS OF 2053-ASP--LEU-2471</scope>
</reference>
<reference key="9">
    <citation type="journal article" date="2022" name="Int. J. Mol. Sci.">
        <title>Inducible systemic Gcn1 deletion in mice leads to transient body weight loss upon tamoxifen treatment associated with decrease of fat and liver glycogen storage.</title>
        <authorList>
            <person name="Liu J."/>
            <person name="Kasai S."/>
            <person name="Tatara Y."/>
            <person name="Yamazaki H."/>
            <person name="Mimura J."/>
            <person name="Mizuno S."/>
            <person name="Sugiyama F."/>
            <person name="Takahashi S."/>
            <person name="Sato T."/>
            <person name="Ozaki T."/>
            <person name="Tanji K."/>
            <person name="Wakabayashi K."/>
            <person name="Maeda H."/>
            <person name="Mizukami H."/>
            <person name="Shinkai Y."/>
            <person name="Kumagai Y."/>
            <person name="Tomita H."/>
            <person name="Itoh K."/>
        </authorList>
    </citation>
    <scope>DISRUPTION PHENOTYPE</scope>
</reference>
<name>GCN1_MOUSE</name>
<dbReference type="EMBL" id="AC159539">
    <property type="status" value="NOT_ANNOTATED_CDS"/>
    <property type="molecule type" value="Genomic_DNA"/>
</dbReference>
<dbReference type="EMBL" id="BC150735">
    <property type="protein sequence ID" value="AAI50736.1"/>
    <property type="molecule type" value="mRNA"/>
</dbReference>
<dbReference type="CCDS" id="CCDS19595.1"/>
<dbReference type="RefSeq" id="NP_766307.2">
    <property type="nucleotide sequence ID" value="NM_172719.2"/>
</dbReference>
<dbReference type="FunCoup" id="E9PVA8">
    <property type="interactions" value="3429"/>
</dbReference>
<dbReference type="IntAct" id="E9PVA8">
    <property type="interactions" value="5"/>
</dbReference>
<dbReference type="MINT" id="E9PVA8"/>
<dbReference type="STRING" id="10090.ENSMUSP00000069432"/>
<dbReference type="GlyGen" id="E9PVA8">
    <property type="glycosylation" value="4 sites, 2 N-linked glycans (2 sites), 1 O-linked glycan (1 site)"/>
</dbReference>
<dbReference type="iPTMnet" id="E9PVA8"/>
<dbReference type="PhosphoSitePlus" id="E9PVA8"/>
<dbReference type="SwissPalm" id="E9PVA8"/>
<dbReference type="jPOST" id="E9PVA8"/>
<dbReference type="PaxDb" id="10090-ENSMUSP00000069432"/>
<dbReference type="PeptideAtlas" id="E9PVA8"/>
<dbReference type="ProteomicsDB" id="267424"/>
<dbReference type="Pumba" id="E9PVA8"/>
<dbReference type="Antibodypedia" id="9618">
    <property type="antibodies" value="80 antibodies from 15 providers"/>
</dbReference>
<dbReference type="Ensembl" id="ENSMUST00000064454.12">
    <property type="protein sequence ID" value="ENSMUSP00000069432.8"/>
    <property type="gene ID" value="ENSMUSG00000041638.19"/>
</dbReference>
<dbReference type="GeneID" id="231659"/>
<dbReference type="KEGG" id="mmu:231659"/>
<dbReference type="UCSC" id="uc008zeg.1">
    <property type="organism name" value="mouse"/>
</dbReference>
<dbReference type="AGR" id="MGI:2444248"/>
<dbReference type="CTD" id="10985"/>
<dbReference type="MGI" id="MGI:2444248">
    <property type="gene designation" value="Gcn1"/>
</dbReference>
<dbReference type="VEuPathDB" id="HostDB:ENSMUSG00000041638"/>
<dbReference type="eggNOG" id="KOG1242">
    <property type="taxonomic scope" value="Eukaryota"/>
</dbReference>
<dbReference type="GeneTree" id="ENSGT00940000153612"/>
<dbReference type="HOGENOM" id="CLU_000504_2_2_1"/>
<dbReference type="InParanoid" id="E9PVA8"/>
<dbReference type="OMA" id="KYATQRG"/>
<dbReference type="OrthoDB" id="5148094at2759"/>
<dbReference type="PhylomeDB" id="E9PVA8"/>
<dbReference type="TreeFam" id="TF105398"/>
<dbReference type="BioGRID-ORCS" id="231659">
    <property type="hits" value="21 hits in 82 CRISPR screens"/>
</dbReference>
<dbReference type="CD-CODE" id="CE726F99">
    <property type="entry name" value="Postsynaptic density"/>
</dbReference>
<dbReference type="ChiTaRS" id="Gcn1l1">
    <property type="organism name" value="mouse"/>
</dbReference>
<dbReference type="PRO" id="PR:E9PVA8"/>
<dbReference type="Proteomes" id="UP000000589">
    <property type="component" value="Chromosome 5"/>
</dbReference>
<dbReference type="RNAct" id="E9PVA8">
    <property type="molecule type" value="protein"/>
</dbReference>
<dbReference type="Bgee" id="ENSMUSG00000041638">
    <property type="expression patterns" value="Expressed in retinal neural layer and 157 other cell types or tissues"/>
</dbReference>
<dbReference type="GO" id="GO:0005737">
    <property type="term" value="C:cytoplasm"/>
    <property type="evidence" value="ECO:0000314"/>
    <property type="project" value="UniProtKB"/>
</dbReference>
<dbReference type="GO" id="GO:0005829">
    <property type="term" value="C:cytosol"/>
    <property type="evidence" value="ECO:0000304"/>
    <property type="project" value="Reactome"/>
</dbReference>
<dbReference type="GO" id="GO:0022626">
    <property type="term" value="C:cytosolic ribosome"/>
    <property type="evidence" value="ECO:0007669"/>
    <property type="project" value="Ensembl"/>
</dbReference>
<dbReference type="GO" id="GO:0060090">
    <property type="term" value="F:molecular adaptor activity"/>
    <property type="evidence" value="ECO:0000250"/>
    <property type="project" value="UniProtKB"/>
</dbReference>
<dbReference type="GO" id="GO:0043539">
    <property type="term" value="F:protein serine/threonine kinase activator activity"/>
    <property type="evidence" value="ECO:0000314"/>
    <property type="project" value="UniProtKB"/>
</dbReference>
<dbReference type="GO" id="GO:0170011">
    <property type="term" value="F:stalled ribosome sensor activity"/>
    <property type="evidence" value="ECO:0007669"/>
    <property type="project" value="Ensembl"/>
</dbReference>
<dbReference type="GO" id="GO:0055106">
    <property type="term" value="F:ubiquitin-protein transferase regulator activity"/>
    <property type="evidence" value="ECO:0007669"/>
    <property type="project" value="Ensembl"/>
</dbReference>
<dbReference type="GO" id="GO:0034198">
    <property type="term" value="P:cellular response to amino acid starvation"/>
    <property type="evidence" value="ECO:0000315"/>
    <property type="project" value="UniProtKB"/>
</dbReference>
<dbReference type="GO" id="GO:0140469">
    <property type="term" value="P:GCN2-mediated signaling"/>
    <property type="evidence" value="ECO:0000314"/>
    <property type="project" value="UniProtKB"/>
</dbReference>
<dbReference type="GO" id="GO:0160127">
    <property type="term" value="P:protein-RNA covalent cross-linking repair"/>
    <property type="evidence" value="ECO:0007669"/>
    <property type="project" value="Ensembl"/>
</dbReference>
<dbReference type="GO" id="GO:0006417">
    <property type="term" value="P:regulation of translation"/>
    <property type="evidence" value="ECO:0007669"/>
    <property type="project" value="UniProtKB-KW"/>
</dbReference>
<dbReference type="GO" id="GO:0072344">
    <property type="term" value="P:rescue of stalled ribosome"/>
    <property type="evidence" value="ECO:0000250"/>
    <property type="project" value="UniProtKB"/>
</dbReference>
<dbReference type="FunFam" id="1.25.10.10:FF:000090">
    <property type="entry name" value="eIF-2-alpha kinase activator GCN1"/>
    <property type="match status" value="1"/>
</dbReference>
<dbReference type="FunFam" id="1.25.10.10:FF:000096">
    <property type="entry name" value="eIF-2-alpha kinase activator gcn1"/>
    <property type="match status" value="1"/>
</dbReference>
<dbReference type="FunFam" id="1.25.10.10:FF:000162">
    <property type="entry name" value="GCN1, eIF2 alpha kinase activator homolog"/>
    <property type="match status" value="1"/>
</dbReference>
<dbReference type="FunFam" id="1.25.10.10:FF:000361">
    <property type="entry name" value="GCN1, eIF2 alpha kinase activator homolog"/>
    <property type="match status" value="1"/>
</dbReference>
<dbReference type="Gene3D" id="1.25.10.10">
    <property type="entry name" value="Leucine-rich Repeat Variant"/>
    <property type="match status" value="6"/>
</dbReference>
<dbReference type="InterPro" id="IPR011989">
    <property type="entry name" value="ARM-like"/>
</dbReference>
<dbReference type="InterPro" id="IPR016024">
    <property type="entry name" value="ARM-type_fold"/>
</dbReference>
<dbReference type="InterPro" id="IPR000225">
    <property type="entry name" value="Armadillo"/>
</dbReference>
<dbReference type="InterPro" id="IPR056810">
    <property type="entry name" value="GNC1-like_N"/>
</dbReference>
<dbReference type="InterPro" id="IPR021133">
    <property type="entry name" value="HEAT_type_2"/>
</dbReference>
<dbReference type="InterPro" id="IPR034085">
    <property type="entry name" value="TOG"/>
</dbReference>
<dbReference type="PANTHER" id="PTHR23346:SF7">
    <property type="entry name" value="STALLED RIBOSOME SENSOR GCN1"/>
    <property type="match status" value="1"/>
</dbReference>
<dbReference type="PANTHER" id="PTHR23346">
    <property type="entry name" value="TRANSLATIONAL ACTIVATOR GCN1-RELATED"/>
    <property type="match status" value="1"/>
</dbReference>
<dbReference type="Pfam" id="PF24993">
    <property type="entry name" value="GNC1_N"/>
    <property type="match status" value="1"/>
</dbReference>
<dbReference type="Pfam" id="PF24984">
    <property type="entry name" value="HEAT_EF3_GNC1"/>
    <property type="match status" value="1"/>
</dbReference>
<dbReference type="Pfam" id="PF24987">
    <property type="entry name" value="HEAT_EF3_N"/>
    <property type="match status" value="2"/>
</dbReference>
<dbReference type="Pfam" id="PF23271">
    <property type="entry name" value="HEAT_GCN1"/>
    <property type="match status" value="1"/>
</dbReference>
<dbReference type="SMART" id="SM00185">
    <property type="entry name" value="ARM"/>
    <property type="match status" value="5"/>
</dbReference>
<dbReference type="SMART" id="SM01349">
    <property type="entry name" value="TOG"/>
    <property type="match status" value="1"/>
</dbReference>
<dbReference type="SUPFAM" id="SSF48371">
    <property type="entry name" value="ARM repeat"/>
    <property type="match status" value="4"/>
</dbReference>
<dbReference type="PROSITE" id="PS50077">
    <property type="entry name" value="HEAT_REPEAT"/>
    <property type="match status" value="3"/>
</dbReference>
<comment type="function">
    <text evidence="2 4 7 8">Ribosome collision sensor that plays a key role in the RNF14-RNF25 translation quality control pathway, a pathway that takes place when a ribosome has stalled during translation, and which promotes ubiquitination and degradation of translation factors on stalled ribosomes (By similarity). Directly binds to the ribosome and acts as a sentinel for colliding ribosomes: activated following ribosome stalling and promotes recruitment of RNF14, which directly ubiquitinates EEF1A1/eEF1A, leading to its degradation (By similarity). In addition to EEF1A1/eEF1A, the RNF14-RNF25 translation quality control pathway mediates degradation of ETF1/eRF1 and ubiquitination of ribosomal protein (By similarity). GCN1 also acts as a positive activator of the integrated stress response (ISR) by mediating activation of EIF2AK4/GCN2 in response to amino acid starvation (PubMed:15937339, PubMed:24333428, PubMed:32324833). Interaction with EIF2AK4/GCN2 on translating ribosomes stimulates EIF2AK4/GCN2 kinase activity, leading to phosphorylation of eukaryotic translation initiation factor 2 (eIF-2-alpha/EIF2S1) (PubMed:24333428, PubMed:32324833). EIF2S1/eIF-2-alpha phosphorylation converts EIF2S1/eIF-2-alpha into a global protein synthesis inhibitor, leading to a global attenuation of cap-dependent translation, and thus to a reduced overall utilization of amino acids, while concomitantly initiating the preferential translation of ISR-specific mRNAs, such as the transcriptional activator ATF4, and hence allowing ATF4-mediated reprogramming of amino acid biosynthetic gene expression to alleviate nutrient depletion (PubMed:24333428, PubMed:32324833).</text>
</comment>
<comment type="subunit">
    <text evidence="2 4 5 7">Interacts with EIF2AK4/GCN2; this interaction stimulates the EIF2AK4/GCN2 kinase activity and is impaired by IMPACT upon a variety of stress conditions, such as amino acid depletion, UV-C irradiation, proteasome inhibitor treatment and glucose deprivation (PubMed:24333428). Interacts with IMPACT; this prevents the interaction of GCN1 with EIF2AK4/GCN2 and inhibits EIF2AK4/GCN2 kinase activity (PubMed:15937339, PubMed:22404850). Interacts with RNF14; interaction takes place following ribosome stalling and promotes recruitment of RNF14 (By similarity).</text>
</comment>
<comment type="subcellular location">
    <subcellularLocation>
        <location evidence="8 12">Cytoplasm</location>
    </subcellularLocation>
    <text evidence="6">Associates with ribosomes in undifferentiated neuroblastoma cells and increases after neuronal differentiation (PubMed:23447528).</text>
</comment>
<comment type="tissue specificity">
    <text evidence="4">Expressed in the hypothalamus, cortex and hippocampus (PubMed:15937339).</text>
</comment>
<comment type="domain">
    <text evidence="7 8">The RWDBD (RWD-binding domain) region mediates binding to RWD domain-containing proteins, such as EIF2AK4/GCN2, IMPACT and RNF14.</text>
</comment>
<comment type="disruption phenotype">
    <text evidence="8 9">Perinatal lethality; mice die at the intermediate stage of embryonic development because of severe growth retardation (PubMed:32324833). Tamoxifen-inducible deletion in adult mice leads to transient body weight loss associated with decrease of fat and liver glycogen storage (PubMed:35328622).</text>
</comment>
<comment type="similarity">
    <text evidence="11">Belongs to the GCN1 family.</text>
</comment>
<protein>
    <recommendedName>
        <fullName evidence="11">Stalled ribosome sensor GCN1</fullName>
    </recommendedName>
    <alternativeName>
        <fullName evidence="2">GCN1 eIF-2-alpha kinase activator homolog</fullName>
    </alternativeName>
    <alternativeName>
        <fullName evidence="13">GCN1-like protein 1</fullName>
    </alternativeName>
    <alternativeName>
        <fullName evidence="13">General control of amino-acid synthesis 1-like protein 1</fullName>
    </alternativeName>
    <alternativeName>
        <fullName evidence="11">Translational activator GCN1</fullName>
    </alternativeName>
</protein>
<sequence>MAADTQVSETLKRFAVKVTTASVKERREILSELGRCIAGKDLPEGAVKGLCKLFCLTLHRYRDAASRRALQAAIQQLAEAQPEATAKNLLHSLQSSGVGSKACVPSKSSGSAALLALTWTCLLVRIVFPLKAKRQGDIWNKLVEVQCLLLLEVLGGSHKHAVDGAVKKLTKLWKENPGLVEQYFSAILSLEPSQNYAAMLGLLVQFCTNHKEMDAVSQHKSTLLEFYVKNILMSKAKPPKYLLDNCAPLLRFMSHSEFKDLILPTIQKSLLRSPENVIETISSLLASVTLDLSQYALDIVKGLANQLKSNSPRLMDEAVLALRNLARQCSDSSATEALTKHLFAILGGSEGKLTIIAQKMSVLSGIGSLSHHVVSGPSGQVLNGCVAELFIPFLQQEVHEGTLVHAVSILALWCNRFTTEVPKKLTDWFKKVFSLKTSTSAVRHAYLQCMLASFRGDTLLQALDFLPLLMQTVEKAASQGTQVPTVTEGVAAALLLSKLSVADAQAEAKLSGFWQLVVDEKRQTFTSEKFLLLASEDALCTVLRLTERLFLDHPHRLTNSKVQQYYRVLVAVLLSRTWHVRRQAQQTVRKLLSSLGGVKLANGLLDELKTVLNSHKVLPLEALVTDAGEVTEMGKTYVPPRVLQEALCVISGVPGLKGDIPSTEQLAQEMLIISHHPSLVAVQSGLWPALLTRMKIDPDAFITRHLDQIIPRITTQSPLNQSSMNAMGSLSVLSPDRVLPQLISTITASVQNPALCLVTREEFSIMQTPAGELFDKSIIQSAQQDSIKKANMKRENKAYSFKEQIIEMELKEEIKKKKGIKEEVQLTSKQKEMLQAQMDKEAQIRRRLQELDGELEAALGLLDAIMARNPCGLIQYIPVLVDAFLPLLKSPLAAPRVKGPFLSLAACVMPPRLKTLGTLVSHVTLRLLKPECALDKSWCQEELPVAVRRAVSLLHTHTIPSRVGKGEPDAAPLSAPAFSLVFPMLKMVLTEMPYHSEEEEEQMAQILQILTVHAQLRASPDTPPERVDENGPELLPRVAMLRLLTWVIGTGSPRLQVLASDTLTALCASSSGEDGCAFAEQEEVDVLLAALQSPCASVRETALRGLMELRLVLPSPDTDEKSGLSLLRRLWVIKFDKEDEIRKLAERLWSTMGLDLQSDLCSLLIDDVIYHEAAVRQAGAEALSQAVARYQRQAAEVMGRLMEIYQEKLYRPPPVLDALGRVISESPPDQWEARCGLALALNKLSQYLDSSQVKPLFQFFVPDALNDRNPDVRKCMLDAALATLNAHGKENVNSLLPVFEEFLKDAPNDASYDAVRQSVVVLMGSLAKHLDKSDPKVKPIVAKLIAALSTPSQQVQESVASCLPPLVPAVKEDAGGMIQRLMQQLLESDKYAERKGAAYGLAGLVKGLGILSLKQQEMMAALTDAIQDKKNFRRREGALFAFEMLCTMLGKLFEPYVVHVLPHLLLCFGDGNQYVREAADDCAKAVMSNLSAHGVKLVLPSLLAALEEESWRTKAGSVELLGAMAYCAPKQLSSCLPNIVPKLTEVLTDSHVKVQKAGQQALRQIGSVIRNPEILAIAPVLLDALTDPSRKTQKCLQTLLDTKFVHFIDAPSLALIMPIVQRAFQDRSTDTRKMAAQIIGNMYSLTDQKDLAPYLPSVTPGLKASLLDPVPEVRTVSAKALGAMVKGMGESCFEDLLPWLMETLTYEQSSVDRSGAAQGLAEVMAGLGVEKLEKLMPEIVATASKVDIAPHVRDGYIMMFNYLPITFGDKFTPYVGPIIPCILKALADENEFVRDTALRAGQRVISMYAETAIALLLPQLEQGLFDDLWRIRFSSVQLLGDLLFHISGVTGKMTTETASEDDNFGTAQSNKAIITALGVDRRNRVLAGLYMGRSDTQLVVRQASLHVWKIVVSNTPRTLREILPTLFGLLLGFLASTCADKRTIAARTLGDLVRKLGEKILPEIIPILEEGLRSQKSDERQGVCIGLSEIMKSTSRDAVLFFSESLVPTARKALCDPLEEVREAAAKTFEQLHSTIGHQALEDILPFLLKQLDDEEVSEFALDGLKQVMAVKSRVVLPYLVPKLTTPPVNTRVLAFLSSVAGDALTRHLGVILPAVMLALKEKLGTPDEQLEMANCQAVILSVEDDTGHRIIIEDLLEATRSPEVGMRQAAAIILNMYCSRSKADYSSHLRSLVSGLIRLFNDSSPVVLEESWDALNAITKKLDAGNQLALIEELHKEIRFIGNECKGEHVPGFCLPKRGVTSILPVLREGVLTGSPEQKEEAAKGLGLVIRLTSADALRPSVVSITGPLIRILGDRFNWTVKAALLETLSLLLGKVGIALKPFLPQLQTTFTKALQDSNRGVRLKAADALGKLISIHVKVDPLFTELLNGIRAVEDPGIRDTMLQALRFVIQGAGSKVDAAIRKNLVSLLLSMLGHDEDNTRISTAGCLGELCAFLTDEELNTVLQQCLLADVSGIDWMVRHGRSLALSVAVNVAPSRLCAGRYSNEVQDMILSNAVADRIPIAMSGIRGMGFLMKYHIETGSGQLPPRLSSLLIKCLQNPCSDIRLVAEKMIWWANKEPRPPLEPQTIKPILKALLDNTKDKNTVVRAYSDQAIVNLLKMRRGEELLQSLSKILDVASLEALNECSRRSLRKLACQADSVEQVDDTILT</sequence>
<feature type="initiator methionine" description="Removed" evidence="2">
    <location>
        <position position="1"/>
    </location>
</feature>
<feature type="chain" id="PRO_0000435424" description="Stalled ribosome sensor GCN1">
    <location>
        <begin position="2"/>
        <end position="2671"/>
    </location>
</feature>
<feature type="repeat" description="HEAT 1" evidence="3">
    <location>
        <begin position="140"/>
        <end position="178"/>
    </location>
</feature>
<feature type="repeat" description="HEAT 2" evidence="3">
    <location>
        <begin position="257"/>
        <end position="293"/>
    </location>
</feature>
<feature type="repeat" description="HEAT 3" evidence="3">
    <location>
        <begin position="294"/>
        <end position="331"/>
    </location>
</feature>
<feature type="repeat" description="HEAT 4" evidence="3">
    <location>
        <begin position="385"/>
        <end position="423"/>
    </location>
</feature>
<feature type="repeat" description="HEAT 5" evidence="3">
    <location>
        <begin position="425"/>
        <end position="459"/>
    </location>
</feature>
<feature type="repeat" description="HEAT 6" evidence="3">
    <location>
        <begin position="460"/>
        <end position="500"/>
    </location>
</feature>
<feature type="repeat" description="HEAT 7" evidence="3">
    <location>
        <begin position="560"/>
        <end position="597"/>
    </location>
</feature>
<feature type="repeat" description="HEAT 8" evidence="3">
    <location>
        <begin position="599"/>
        <end position="636"/>
    </location>
</feature>
<feature type="repeat" description="HEAT 9" evidence="3">
    <location>
        <begin position="700"/>
        <end position="732"/>
    </location>
</feature>
<feature type="repeat" description="HEAT 10" evidence="3">
    <location>
        <begin position="733"/>
        <end position="772"/>
    </location>
</feature>
<feature type="repeat" description="HEAT 11" evidence="3">
    <location>
        <begin position="879"/>
        <end position="918"/>
    </location>
</feature>
<feature type="repeat" description="HEAT 12" evidence="3">
    <location>
        <begin position="979"/>
        <end position="1016"/>
    </location>
</feature>
<feature type="repeat" description="HEAT 13" evidence="3">
    <location>
        <begin position="1035"/>
        <end position="1072"/>
    </location>
</feature>
<feature type="repeat" description="HEAT 14" evidence="3">
    <location>
        <begin position="1078"/>
        <end position="1115"/>
    </location>
</feature>
<feature type="repeat" description="HEAT 15" evidence="3">
    <location>
        <begin position="1155"/>
        <end position="1192"/>
    </location>
</feature>
<feature type="repeat" description="HEAT 16" evidence="3">
    <location>
        <begin position="1210"/>
        <end position="1250"/>
    </location>
</feature>
<feature type="repeat" description="HEAT 17" evidence="3">
    <location>
        <begin position="1251"/>
        <end position="1289"/>
    </location>
</feature>
<feature type="repeat" description="HEAT 18" evidence="3">
    <location>
        <begin position="1290"/>
        <end position="1332"/>
    </location>
</feature>
<feature type="repeat" description="HEAT 19" evidence="3">
    <location>
        <begin position="1335"/>
        <end position="1372"/>
    </location>
</feature>
<feature type="repeat" description="HEAT 20" evidence="3">
    <location>
        <begin position="1374"/>
        <end position="1410"/>
    </location>
</feature>
<feature type="repeat" description="HEAT 21" evidence="3">
    <location>
        <begin position="1413"/>
        <end position="1451"/>
    </location>
</feature>
<feature type="repeat" description="HEAT 22" evidence="3">
    <location>
        <begin position="1455"/>
        <end position="1492"/>
    </location>
</feature>
<feature type="repeat" description="HEAT 23" evidence="3">
    <location>
        <begin position="1493"/>
        <end position="1530"/>
    </location>
</feature>
<feature type="repeat" description="HEAT 24" evidence="3">
    <location>
        <begin position="1534"/>
        <end position="1571"/>
    </location>
</feature>
<feature type="repeat" description="HEAT 25" evidence="3">
    <location>
        <begin position="1573"/>
        <end position="1609"/>
    </location>
</feature>
<feature type="repeat" description="HEAT 26" evidence="3">
    <location>
        <begin position="1611"/>
        <end position="1648"/>
    </location>
</feature>
<feature type="repeat" description="HEAT 27" evidence="3">
    <location>
        <begin position="1653"/>
        <end position="1690"/>
    </location>
</feature>
<feature type="repeat" description="HEAT 28" evidence="3">
    <location>
        <begin position="1692"/>
        <end position="1729"/>
    </location>
</feature>
<feature type="repeat" description="HEAT 29" evidence="3">
    <location>
        <begin position="1731"/>
        <end position="1769"/>
    </location>
</feature>
<feature type="repeat" description="HEAT 30" evidence="3">
    <location>
        <begin position="1773"/>
        <end position="1810"/>
    </location>
</feature>
<feature type="repeat" description="HEAT 31" evidence="3">
    <location>
        <begin position="1812"/>
        <end position="1848"/>
    </location>
</feature>
<feature type="repeat" description="HEAT 32" evidence="3">
    <location>
        <begin position="1921"/>
        <end position="1958"/>
    </location>
</feature>
<feature type="repeat" description="HEAT 33" evidence="3">
    <location>
        <begin position="1959"/>
        <end position="1996"/>
    </location>
</feature>
<feature type="repeat" description="HEAT 34" evidence="3">
    <location>
        <begin position="2001"/>
        <end position="2038"/>
    </location>
</feature>
<feature type="repeat" description="HEAT 35" evidence="3">
    <location>
        <begin position="2039"/>
        <end position="2074"/>
    </location>
</feature>
<feature type="repeat" description="HEAT 36" evidence="3">
    <location>
        <begin position="2076"/>
        <end position="2108"/>
    </location>
</feature>
<feature type="repeat" description="HEAT 37" evidence="3">
    <location>
        <begin position="2111"/>
        <end position="2146"/>
    </location>
</feature>
<feature type="repeat" description="HEAT 38" evidence="3">
    <location>
        <begin position="2147"/>
        <end position="2184"/>
    </location>
</feature>
<feature type="repeat" description="HEAT 39" evidence="3">
    <location>
        <begin position="2188"/>
        <end position="2225"/>
    </location>
</feature>
<feature type="repeat" description="HEAT 40" evidence="3">
    <location>
        <begin position="2259"/>
        <end position="2296"/>
    </location>
</feature>
<feature type="repeat" description="HEAT 41" evidence="3">
    <location>
        <begin position="2301"/>
        <end position="2338"/>
    </location>
</feature>
<feature type="repeat" description="HEAT 42" evidence="3">
    <location>
        <begin position="2339"/>
        <end position="2380"/>
    </location>
</feature>
<feature type="repeat" description="HEAT 43" evidence="3">
    <location>
        <begin position="2382"/>
        <end position="2417"/>
    </location>
</feature>
<feature type="repeat" description="HEAT 44" evidence="3">
    <location>
        <begin position="2422"/>
        <end position="2459"/>
    </location>
</feature>
<feature type="repeat" description="HEAT 45" evidence="3">
    <location>
        <begin position="2546"/>
        <end position="2583"/>
    </location>
</feature>
<feature type="repeat" description="HEAT 46" evidence="3">
    <location>
        <begin position="2588"/>
        <end position="2625"/>
    </location>
</feature>
<feature type="repeat" description="HEAT 47" evidence="3">
    <location>
        <begin position="2627"/>
        <end position="2661"/>
    </location>
</feature>
<feature type="region of interest" description="RWDBD region" evidence="1">
    <location>
        <begin position="2260"/>
        <end position="2408"/>
    </location>
</feature>
<feature type="coiled-coil region" evidence="3">
    <location>
        <begin position="804"/>
        <end position="865"/>
    </location>
</feature>
<feature type="modified residue" description="N-acetylalanine" evidence="2">
    <location>
        <position position="2"/>
    </location>
</feature>
<feature type="modified residue" description="Phosphoserine" evidence="2">
    <location>
        <position position="729"/>
    </location>
</feature>
<feature type="modified residue" description="Phosphoserine" evidence="2">
    <location>
        <position position="786"/>
    </location>
</feature>
<feature type="modified residue" description="Phosphoserine" evidence="2">
    <location>
        <position position="2276"/>
    </location>
</feature>
<feature type="mutagenesis site" description="In Gcn1(DeltaRWDBD) mice; mild growth retardation, leading to death soon after birth, most likely due to respiratory failure." evidence="8">
    <location>
        <begin position="2053"/>
        <end position="2471"/>
    </location>
</feature>
<feature type="sequence conflict" description="In Ref. 2; AAI50736." evidence="11" ref="2">
    <original>L</original>
    <variation>V</variation>
    <location>
        <position position="466"/>
    </location>
</feature>
<feature type="sequence conflict" description="In Ref. 2; AAI50736." evidence="11" ref="2">
    <original>D</original>
    <variation>E</variation>
    <location>
        <position position="537"/>
    </location>
</feature>
<feature type="sequence conflict" description="In Ref. 2; AAI50736." evidence="11" ref="2">
    <original>E</original>
    <variation>K</variation>
    <location>
        <position position="1477"/>
    </location>
</feature>
<feature type="sequence conflict" description="In Ref. 2; AAI50736." evidence="11" ref="2">
    <original>S</original>
    <variation>G</variation>
    <location>
        <position position="2544"/>
    </location>
</feature>
<feature type="sequence conflict" description="In Ref. 2; AAI50736." evidence="11" ref="2">
    <original>P</original>
    <variation>H</variation>
    <location>
        <position position="2583"/>
    </location>
</feature>
<organism>
    <name type="scientific">Mus musculus</name>
    <name type="common">Mouse</name>
    <dbReference type="NCBI Taxonomy" id="10090"/>
    <lineage>
        <taxon>Eukaryota</taxon>
        <taxon>Metazoa</taxon>
        <taxon>Chordata</taxon>
        <taxon>Craniata</taxon>
        <taxon>Vertebrata</taxon>
        <taxon>Euteleostomi</taxon>
        <taxon>Mammalia</taxon>
        <taxon>Eutheria</taxon>
        <taxon>Euarchontoglires</taxon>
        <taxon>Glires</taxon>
        <taxon>Rodentia</taxon>
        <taxon>Myomorpha</taxon>
        <taxon>Muroidea</taxon>
        <taxon>Muridae</taxon>
        <taxon>Murinae</taxon>
        <taxon>Mus</taxon>
        <taxon>Mus</taxon>
    </lineage>
</organism>
<accession>E9PVA8</accession>
<accession>B2RWW6</accession>